<organism>
    <name type="scientific">Influenza A virus (strain A/Brazil/11/1978 H1N1)</name>
    <dbReference type="NCBI Taxonomy" id="393560"/>
    <lineage>
        <taxon>Viruses</taxon>
        <taxon>Riboviria</taxon>
        <taxon>Orthornavirae</taxon>
        <taxon>Negarnaviricota</taxon>
        <taxon>Polyploviricotina</taxon>
        <taxon>Insthoviricetes</taxon>
        <taxon>Articulavirales</taxon>
        <taxon>Orthomyxoviridae</taxon>
        <taxon>Alphainfluenzavirus</taxon>
        <taxon>Alphainfluenzavirus influenzae</taxon>
        <taxon>Influenza A virus</taxon>
    </lineage>
</organism>
<organismHost>
    <name type="scientific">Aves</name>
    <dbReference type="NCBI Taxonomy" id="8782"/>
</organismHost>
<organismHost>
    <name type="scientific">Homo sapiens</name>
    <name type="common">Human</name>
    <dbReference type="NCBI Taxonomy" id="9606"/>
</organismHost>
<organismHost>
    <name type="scientific">Sus scrofa</name>
    <name type="common">Pig</name>
    <dbReference type="NCBI Taxonomy" id="9823"/>
</organismHost>
<accession>A4GBY0</accession>
<protein>
    <recommendedName>
        <fullName evidence="1">Neuraminidase</fullName>
        <ecNumber evidence="1">3.2.1.18</ecNumber>
    </recommendedName>
</protein>
<proteinExistence type="inferred from homology"/>
<name>NRAM_I77AA</name>
<comment type="function">
    <text evidence="1">Catalyzes the removal of terminal sialic acid residues from viral and cellular glycoconjugates. Cleaves off the terminal sialic acids on the glycosylated HA during virus budding to facilitate virus release. Additionally helps virus spread through the circulation by further removing sialic acids from the cell surface. These cleavages prevent self-aggregation and ensure the efficient spread of the progeny virus from cell to cell. Otherwise, infection would be limited to one round of replication. Described as a receptor-destroying enzyme because it cleaves a terminal sialic acid from the cellular receptors. May facilitate viral invasion of the upper airways by cleaving the sialic acid moieties on the mucin of the airway epithelial cells. Likely to plays a role in the budding process through its association with lipid rafts during intracellular transport. May additionally display a raft-association independent effect on budding. Plays a role in the determination of host range restriction on replication and virulence. Sialidase activity in late endosome/lysosome traffic seems to enhance virus replication.</text>
</comment>
<comment type="catalytic activity">
    <reaction evidence="1">
        <text>Hydrolysis of alpha-(2-&gt;3)-, alpha-(2-&gt;6)-, alpha-(2-&gt;8)- glycosidic linkages of terminal sialic acid residues in oligosaccharides, glycoproteins, glycolipids, colominic acid and synthetic substrates.</text>
        <dbReference type="EC" id="3.2.1.18"/>
    </reaction>
</comment>
<comment type="cofactor">
    <cofactor evidence="1">
        <name>Ca(2+)</name>
        <dbReference type="ChEBI" id="CHEBI:29108"/>
    </cofactor>
</comment>
<comment type="activity regulation">
    <text evidence="1">Inhibited by the neuraminidase inhibitors zanamivir (Relenza) and oseltamivir (Tamiflu). These drugs interfere with the release of progeny virus from infected cells and are effective against all influenza strains. Resistance to neuraminidase inhibitors is quite rare.</text>
</comment>
<comment type="subunit">
    <text evidence="1">Homotetramer.</text>
</comment>
<comment type="subcellular location">
    <subcellularLocation>
        <location evidence="1">Virion membrane</location>
    </subcellularLocation>
    <subcellularLocation>
        <location evidence="1">Host apical cell membrane</location>
        <topology evidence="1">Single-pass type II membrane protein</topology>
    </subcellularLocation>
    <text evidence="1">Preferentially accumulates at the apical plasma membrane in infected polarized epithelial cells, which is the virus assembly site. Uses lipid rafts for cell surface transport and apical sorting. In the virion, forms a mushroom-shaped spike on the surface of the membrane.</text>
</comment>
<comment type="domain">
    <text evidence="1">Intact N-terminus is essential for virion morphogenesis. Possesses two apical sorting signals, one in the ectodomain, which is likely to be a glycan, and the other in the transmembrane domain. The transmembrane domain also plays a role in lipid raft association.</text>
</comment>
<comment type="PTM">
    <text evidence="1">N-glycosylated.</text>
</comment>
<comment type="miscellaneous">
    <text>The influenza A genome consist of 8 RNA segments. Genetic variation of hemagglutinin and/or neuraminidase genes results in the emergence of new influenza strains. The mechanism of variation can be the result of point mutations or the result of genetic reassortment between segments of two different strains.</text>
</comment>
<comment type="similarity">
    <text evidence="1">Belongs to the glycosyl hydrolase 34 family.</text>
</comment>
<reference key="1">
    <citation type="submission" date="2007-03" db="EMBL/GenBank/DDBJ databases">
        <title>The NIAID influenza genome sequencing project.</title>
        <authorList>
            <person name="Ghedin E."/>
            <person name="Spiro D."/>
            <person name="Miller N."/>
            <person name="Zaborsky J."/>
            <person name="Feldblyum T."/>
            <person name="Subbu V."/>
            <person name="Shumway M."/>
            <person name="Sparenborg J."/>
            <person name="Groveman L."/>
            <person name="Halpin R."/>
            <person name="Sitz J."/>
            <person name="Koo H."/>
            <person name="Salzberg S.L."/>
            <person name="Webster R.G."/>
            <person name="Hoffmann E."/>
            <person name="Krauss S."/>
            <person name="Naeve C."/>
            <person name="Bao Y."/>
            <person name="Bolotov P."/>
            <person name="Dernovoy D."/>
            <person name="Kiryutin B."/>
            <person name="Lipman D.J."/>
            <person name="Tatusova T."/>
        </authorList>
    </citation>
    <scope>NUCLEOTIDE SEQUENCE [GENOMIC RNA]</scope>
</reference>
<reference key="2">
    <citation type="submission" date="2007-03" db="EMBL/GenBank/DDBJ databases">
        <authorList>
            <consortium name="The NIAID Influenza Genome Sequencing Consortium"/>
        </authorList>
    </citation>
    <scope>NUCLEOTIDE SEQUENCE [GENOMIC RNA]</scope>
</reference>
<sequence length="470" mass="51863">MNPNQKIITIGSICMAIGIISLILQIGNIISIWVSHSIQTGSQNHTGICNQRIITYENSTWVNQTYVNISNTNVVAGKDTTSMTLAGNSSLCPIRGWAIYSKDNSIRIGSKGDVFVIREPFISCSHLECRTFFLTQGALLNDKHSNGTVKDRSPYRALMSCPIGEAPSPYNSRFESVAWSASACHDGMGWLTIGISGPDDGAVAVLKYNGIITETIKSWRKQILRTQESECVCVNGSCFTIMTDGPSDGPASYRIFKIEKGKITKSIELDAPNSHYEECSCYPDTGTVMCVCRDNWHGSNRPWVSFNQNLDYQIGYICSGVFGDNPRPKDGKGSCDPVNVDGADGVKGFSYRYGNGVWIGRTKSNSSRKGFEMIWDPNGWTDTDSNFLVKQDVVAMTDWSGYSGSFVQHPELTGLDCMRPCFWVELIRGRPREKTTIWTSGSSISFCGVNSDTVNWSWPDGAELPFTIDK</sequence>
<dbReference type="EC" id="3.2.1.18" evidence="1"/>
<dbReference type="EMBL" id="CY020295">
    <property type="protein sequence ID" value="ABO38068.1"/>
    <property type="molecule type" value="Viral_cRNA"/>
</dbReference>
<dbReference type="SMR" id="A4GBY0"/>
<dbReference type="CAZy" id="GH34">
    <property type="family name" value="Glycoside Hydrolase Family 34"/>
</dbReference>
<dbReference type="GlyCosmos" id="A4GBY0">
    <property type="glycosylation" value="9 sites, No reported glycans"/>
</dbReference>
<dbReference type="PRO" id="PR:A4GBY0"/>
<dbReference type="Proteomes" id="UP000008025">
    <property type="component" value="Genome"/>
</dbReference>
<dbReference type="GO" id="GO:0020002">
    <property type="term" value="C:host cell plasma membrane"/>
    <property type="evidence" value="ECO:0007669"/>
    <property type="project" value="UniProtKB-SubCell"/>
</dbReference>
<dbReference type="GO" id="GO:0016020">
    <property type="term" value="C:membrane"/>
    <property type="evidence" value="ECO:0007669"/>
    <property type="project" value="UniProtKB-UniRule"/>
</dbReference>
<dbReference type="GO" id="GO:0055036">
    <property type="term" value="C:virion membrane"/>
    <property type="evidence" value="ECO:0007669"/>
    <property type="project" value="UniProtKB-SubCell"/>
</dbReference>
<dbReference type="GO" id="GO:0004308">
    <property type="term" value="F:exo-alpha-sialidase activity"/>
    <property type="evidence" value="ECO:0007669"/>
    <property type="project" value="UniProtKB-UniRule"/>
</dbReference>
<dbReference type="GO" id="GO:0046872">
    <property type="term" value="F:metal ion binding"/>
    <property type="evidence" value="ECO:0007669"/>
    <property type="project" value="UniProtKB-UniRule"/>
</dbReference>
<dbReference type="GO" id="GO:0005975">
    <property type="term" value="P:carbohydrate metabolic process"/>
    <property type="evidence" value="ECO:0007669"/>
    <property type="project" value="InterPro"/>
</dbReference>
<dbReference type="GO" id="GO:0046761">
    <property type="term" value="P:viral budding from plasma membrane"/>
    <property type="evidence" value="ECO:0007669"/>
    <property type="project" value="UniProtKB-UniRule"/>
</dbReference>
<dbReference type="CDD" id="cd15483">
    <property type="entry name" value="Influenza_NA"/>
    <property type="match status" value="1"/>
</dbReference>
<dbReference type="FunFam" id="2.120.10.10:FF:000001">
    <property type="entry name" value="Neuraminidase"/>
    <property type="match status" value="1"/>
</dbReference>
<dbReference type="Gene3D" id="2.120.10.10">
    <property type="match status" value="1"/>
</dbReference>
<dbReference type="HAMAP" id="MF_04071">
    <property type="entry name" value="INFV_NRAM"/>
    <property type="match status" value="1"/>
</dbReference>
<dbReference type="InterPro" id="IPR001860">
    <property type="entry name" value="Glyco_hydro_34"/>
</dbReference>
<dbReference type="InterPro" id="IPR033654">
    <property type="entry name" value="Sialidase_Influenza_A/B"/>
</dbReference>
<dbReference type="InterPro" id="IPR036278">
    <property type="entry name" value="Sialidase_sf"/>
</dbReference>
<dbReference type="Pfam" id="PF00064">
    <property type="entry name" value="Neur"/>
    <property type="match status" value="1"/>
</dbReference>
<dbReference type="SUPFAM" id="SSF50939">
    <property type="entry name" value="Sialidases"/>
    <property type="match status" value="1"/>
</dbReference>
<keyword id="KW-0106">Calcium</keyword>
<keyword id="KW-1015">Disulfide bond</keyword>
<keyword id="KW-0325">Glycoprotein</keyword>
<keyword id="KW-0326">Glycosidase</keyword>
<keyword id="KW-1032">Host cell membrane</keyword>
<keyword id="KW-1043">Host membrane</keyword>
<keyword id="KW-0378">Hydrolase</keyword>
<keyword id="KW-0472">Membrane</keyword>
<keyword id="KW-0479">Metal-binding</keyword>
<keyword id="KW-0735">Signal-anchor</keyword>
<keyword id="KW-0812">Transmembrane</keyword>
<keyword id="KW-1133">Transmembrane helix</keyword>
<keyword id="KW-0946">Virion</keyword>
<evidence type="ECO:0000255" key="1">
    <source>
        <dbReference type="HAMAP-Rule" id="MF_04071"/>
    </source>
</evidence>
<gene>
    <name evidence="1" type="primary">NA</name>
</gene>
<feature type="chain" id="PRO_0000372973" description="Neuraminidase">
    <location>
        <begin position="1"/>
        <end position="470"/>
    </location>
</feature>
<feature type="topological domain" description="Intravirion" evidence="1">
    <location>
        <begin position="1"/>
        <end position="6"/>
    </location>
</feature>
<feature type="transmembrane region" description="Helical" evidence="1">
    <location>
        <begin position="7"/>
        <end position="27"/>
    </location>
</feature>
<feature type="topological domain" description="Virion surface" evidence="1">
    <location>
        <begin position="28"/>
        <end position="470"/>
    </location>
</feature>
<feature type="region of interest" description="Involved in apical transport and lipid raft association" evidence="1">
    <location>
        <begin position="11"/>
        <end position="33"/>
    </location>
</feature>
<feature type="region of interest" description="Hypervariable stalk region" evidence="1">
    <location>
        <begin position="36"/>
        <end position="90"/>
    </location>
</feature>
<feature type="region of interest" description="Head of neuraminidase" evidence="1">
    <location>
        <begin position="91"/>
        <end position="470"/>
    </location>
</feature>
<feature type="active site" description="Proton donor/acceptor" evidence="1">
    <location>
        <position position="151"/>
    </location>
</feature>
<feature type="active site" description="Nucleophile" evidence="1">
    <location>
        <position position="402"/>
    </location>
</feature>
<feature type="binding site" evidence="1">
    <location>
        <position position="118"/>
    </location>
    <ligand>
        <name>substrate</name>
    </ligand>
</feature>
<feature type="binding site" evidence="1">
    <location>
        <position position="152"/>
    </location>
    <ligand>
        <name>substrate</name>
    </ligand>
</feature>
<feature type="binding site" evidence="1">
    <location>
        <begin position="277"/>
        <end position="278"/>
    </location>
    <ligand>
        <name>substrate</name>
    </ligand>
</feature>
<feature type="binding site" evidence="1">
    <location>
        <position position="293"/>
    </location>
    <ligand>
        <name>substrate</name>
    </ligand>
</feature>
<feature type="binding site" evidence="1">
    <location>
        <position position="294"/>
    </location>
    <ligand>
        <name>Ca(2+)</name>
        <dbReference type="ChEBI" id="CHEBI:29108"/>
    </ligand>
</feature>
<feature type="binding site" evidence="1">
    <location>
        <position position="298"/>
    </location>
    <ligand>
        <name>Ca(2+)</name>
        <dbReference type="ChEBI" id="CHEBI:29108"/>
    </ligand>
</feature>
<feature type="binding site" evidence="1">
    <location>
        <position position="324"/>
    </location>
    <ligand>
        <name>Ca(2+)</name>
        <dbReference type="ChEBI" id="CHEBI:29108"/>
    </ligand>
</feature>
<feature type="binding site" evidence="1">
    <location>
        <position position="368"/>
    </location>
    <ligand>
        <name>substrate</name>
    </ligand>
</feature>
<feature type="glycosylation site" description="N-linked (GlcNAc...) asparagine; by host" evidence="1">
    <location>
        <position position="44"/>
    </location>
</feature>
<feature type="glycosylation site" description="N-linked (GlcNAc...) asparagine; by host" evidence="1">
    <location>
        <position position="58"/>
    </location>
</feature>
<feature type="glycosylation site" description="N-linked (GlcNAc...) asparagine; by host" evidence="1">
    <location>
        <position position="63"/>
    </location>
</feature>
<feature type="glycosylation site" description="N-linked (GlcNAc...) asparagine; by host" evidence="1">
    <location>
        <position position="68"/>
    </location>
</feature>
<feature type="glycosylation site" description="N-linked (GlcNAc...) asparagine; by host" evidence="1">
    <location>
        <position position="88"/>
    </location>
</feature>
<feature type="glycosylation site" description="N-linked (GlcNAc...) asparagine; by host" evidence="1">
    <location>
        <position position="146"/>
    </location>
</feature>
<feature type="glycosylation site" description="N-linked (GlcNAc...) asparagine; by host" evidence="1">
    <location>
        <position position="235"/>
    </location>
</feature>
<feature type="glycosylation site" description="N-linked (GlcNAc...) asparagine; by host" evidence="1">
    <location>
        <position position="365"/>
    </location>
</feature>
<feature type="glycosylation site" description="N-linked (GlcNAc...) asparagine; by host" evidence="1">
    <location>
        <position position="455"/>
    </location>
</feature>
<feature type="disulfide bond" evidence="1">
    <location>
        <begin position="92"/>
        <end position="417"/>
    </location>
</feature>
<feature type="disulfide bond" evidence="1">
    <location>
        <begin position="124"/>
        <end position="129"/>
    </location>
</feature>
<feature type="disulfide bond" evidence="1">
    <location>
        <begin position="184"/>
        <end position="231"/>
    </location>
</feature>
<feature type="disulfide bond" evidence="1">
    <location>
        <begin position="233"/>
        <end position="238"/>
    </location>
</feature>
<feature type="disulfide bond" evidence="1">
    <location>
        <begin position="279"/>
        <end position="292"/>
    </location>
</feature>
<feature type="disulfide bond" evidence="1">
    <location>
        <begin position="281"/>
        <end position="290"/>
    </location>
</feature>
<feature type="disulfide bond" evidence="1">
    <location>
        <begin position="318"/>
        <end position="335"/>
    </location>
</feature>
<feature type="disulfide bond" evidence="1">
    <location>
        <begin position="421"/>
        <end position="447"/>
    </location>
</feature>